<organism>
    <name type="scientific">Alkaliphilus oremlandii (strain OhILAs)</name>
    <name type="common">Clostridium oremlandii (strain OhILAs)</name>
    <dbReference type="NCBI Taxonomy" id="350688"/>
    <lineage>
        <taxon>Bacteria</taxon>
        <taxon>Bacillati</taxon>
        <taxon>Bacillota</taxon>
        <taxon>Clostridia</taxon>
        <taxon>Peptostreptococcales</taxon>
        <taxon>Natronincolaceae</taxon>
        <taxon>Alkaliphilus</taxon>
    </lineage>
</organism>
<sequence>MKKIMIDGEQLTLQDIIHVTRNFYEIELSEDAKNRVRNNRKVVDRYVEEEKVVYGITTGFGKFSDVVISKSETEALQRNLIISHACGVGNPLEEDVVRGIMLLRANALSKGYSGIRLETLSTLIEMLNKGVHPVIPEKGSLGASGDLAPLSHMVLVLIGEGEAIYQGKRMSGREAMEAAGIRPVVLTSKEGLALINGTQVMTAIGALTVYDAINLSKISDIAAALTIEAQRGIVTAFDKRVHEVRPHAGQISCAENLNRLLEGSTYTTKQGEIKVQDAYTLRCIPQIHGASKDAIQYVENKINIEINSATDNPLIFSEDNDVISGGNFHGQPMALSFDFLGIALAEIANVSERRIERLVNPQLSGLPAFLTEKGGLNSGFMITQYSAAALVSENKVLAHPASVDSIPSSANQEDHVSMGTIAARKAREIYKNAVNVVAIELMAAAQGIDFYEGYTLGEGTQIAYDTIRNKVSKLQEDRVMYFDINQCANLIFSGELIEAVEKAVELQ</sequence>
<proteinExistence type="inferred from homology"/>
<reference key="1">
    <citation type="submission" date="2007-10" db="EMBL/GenBank/DDBJ databases">
        <title>Complete genome of Alkaliphilus oremlandii OhILAs.</title>
        <authorList>
            <person name="Copeland A."/>
            <person name="Lucas S."/>
            <person name="Lapidus A."/>
            <person name="Barry K."/>
            <person name="Detter J.C."/>
            <person name="Glavina del Rio T."/>
            <person name="Hammon N."/>
            <person name="Israni S."/>
            <person name="Dalin E."/>
            <person name="Tice H."/>
            <person name="Pitluck S."/>
            <person name="Chain P."/>
            <person name="Malfatti S."/>
            <person name="Shin M."/>
            <person name="Vergez L."/>
            <person name="Schmutz J."/>
            <person name="Larimer F."/>
            <person name="Land M."/>
            <person name="Hauser L."/>
            <person name="Kyrpides N."/>
            <person name="Mikhailova N."/>
            <person name="Stolz J.F."/>
            <person name="Dawson A."/>
            <person name="Fisher E."/>
            <person name="Crable B."/>
            <person name="Perera E."/>
            <person name="Lisak J."/>
            <person name="Ranganathan M."/>
            <person name="Basu P."/>
            <person name="Richardson P."/>
        </authorList>
    </citation>
    <scope>NUCLEOTIDE SEQUENCE [LARGE SCALE GENOMIC DNA]</scope>
    <source>
        <strain>OhILAs</strain>
    </source>
</reference>
<accession>A8MF64</accession>
<feature type="chain" id="PRO_0000336581" description="Histidine ammonia-lyase">
    <location>
        <begin position="1"/>
        <end position="507"/>
    </location>
</feature>
<feature type="modified residue" description="2,3-didehydroalanine (Ser)" evidence="1">
    <location>
        <position position="144"/>
    </location>
</feature>
<feature type="cross-link" description="5-imidazolinone (Ala-Gly)" evidence="1">
    <location>
        <begin position="143"/>
        <end position="145"/>
    </location>
</feature>
<evidence type="ECO:0000255" key="1">
    <source>
        <dbReference type="HAMAP-Rule" id="MF_00229"/>
    </source>
</evidence>
<comment type="catalytic activity">
    <reaction evidence="1">
        <text>L-histidine = trans-urocanate + NH4(+)</text>
        <dbReference type="Rhea" id="RHEA:21232"/>
        <dbReference type="ChEBI" id="CHEBI:17771"/>
        <dbReference type="ChEBI" id="CHEBI:28938"/>
        <dbReference type="ChEBI" id="CHEBI:57595"/>
        <dbReference type="EC" id="4.3.1.3"/>
    </reaction>
</comment>
<comment type="pathway">
    <text evidence="1">Amino-acid degradation; L-histidine degradation into L-glutamate; N-formimidoyl-L-glutamate from L-histidine: step 1/3.</text>
</comment>
<comment type="subcellular location">
    <subcellularLocation>
        <location evidence="1">Cytoplasm</location>
    </subcellularLocation>
</comment>
<comment type="PTM">
    <text evidence="1">Contains an active site 4-methylidene-imidazol-5-one (MIO), which is formed autocatalytically by cyclization and dehydration of residues Ala-Ser-Gly.</text>
</comment>
<comment type="similarity">
    <text evidence="1">Belongs to the PAL/histidase family.</text>
</comment>
<keyword id="KW-0963">Cytoplasm</keyword>
<keyword id="KW-0369">Histidine metabolism</keyword>
<keyword id="KW-0456">Lyase</keyword>
<keyword id="KW-1185">Reference proteome</keyword>
<gene>
    <name evidence="1" type="primary">hutH</name>
    <name type="ordered locus">Clos_1187</name>
</gene>
<protein>
    <recommendedName>
        <fullName evidence="1">Histidine ammonia-lyase</fullName>
        <shortName evidence="1">Histidase</shortName>
        <ecNumber evidence="1">4.3.1.3</ecNumber>
    </recommendedName>
</protein>
<dbReference type="EC" id="4.3.1.3" evidence="1"/>
<dbReference type="EMBL" id="CP000853">
    <property type="protein sequence ID" value="ABW18733.1"/>
    <property type="molecule type" value="Genomic_DNA"/>
</dbReference>
<dbReference type="RefSeq" id="WP_012159045.1">
    <property type="nucleotide sequence ID" value="NC_009922.1"/>
</dbReference>
<dbReference type="SMR" id="A8MF64"/>
<dbReference type="STRING" id="350688.Clos_1187"/>
<dbReference type="KEGG" id="aoe:Clos_1187"/>
<dbReference type="eggNOG" id="COG2986">
    <property type="taxonomic scope" value="Bacteria"/>
</dbReference>
<dbReference type="HOGENOM" id="CLU_014801_4_1_9"/>
<dbReference type="OrthoDB" id="9806955at2"/>
<dbReference type="UniPathway" id="UPA00379">
    <property type="reaction ID" value="UER00549"/>
</dbReference>
<dbReference type="Proteomes" id="UP000000269">
    <property type="component" value="Chromosome"/>
</dbReference>
<dbReference type="GO" id="GO:0005737">
    <property type="term" value="C:cytoplasm"/>
    <property type="evidence" value="ECO:0007669"/>
    <property type="project" value="UniProtKB-SubCell"/>
</dbReference>
<dbReference type="GO" id="GO:0004397">
    <property type="term" value="F:histidine ammonia-lyase activity"/>
    <property type="evidence" value="ECO:0007669"/>
    <property type="project" value="UniProtKB-UniRule"/>
</dbReference>
<dbReference type="GO" id="GO:0019556">
    <property type="term" value="P:L-histidine catabolic process to glutamate and formamide"/>
    <property type="evidence" value="ECO:0007669"/>
    <property type="project" value="UniProtKB-UniPathway"/>
</dbReference>
<dbReference type="GO" id="GO:0019557">
    <property type="term" value="P:L-histidine catabolic process to glutamate and formate"/>
    <property type="evidence" value="ECO:0007669"/>
    <property type="project" value="UniProtKB-UniPathway"/>
</dbReference>
<dbReference type="CDD" id="cd00332">
    <property type="entry name" value="PAL-HAL"/>
    <property type="match status" value="1"/>
</dbReference>
<dbReference type="FunFam" id="1.10.275.10:FF:000005">
    <property type="entry name" value="Histidine ammonia-lyase"/>
    <property type="match status" value="1"/>
</dbReference>
<dbReference type="FunFam" id="1.20.200.10:FF:000003">
    <property type="entry name" value="Histidine ammonia-lyase"/>
    <property type="match status" value="1"/>
</dbReference>
<dbReference type="Gene3D" id="1.20.200.10">
    <property type="entry name" value="Fumarase/aspartase (Central domain)"/>
    <property type="match status" value="1"/>
</dbReference>
<dbReference type="Gene3D" id="1.10.275.10">
    <property type="entry name" value="Fumarase/aspartase (N-terminal domain)"/>
    <property type="match status" value="1"/>
</dbReference>
<dbReference type="HAMAP" id="MF_00229">
    <property type="entry name" value="His_ammonia_lyase"/>
    <property type="match status" value="1"/>
</dbReference>
<dbReference type="InterPro" id="IPR001106">
    <property type="entry name" value="Aromatic_Lyase"/>
</dbReference>
<dbReference type="InterPro" id="IPR024083">
    <property type="entry name" value="Fumarase/histidase_N"/>
</dbReference>
<dbReference type="InterPro" id="IPR005921">
    <property type="entry name" value="HutH"/>
</dbReference>
<dbReference type="InterPro" id="IPR008948">
    <property type="entry name" value="L-Aspartase-like"/>
</dbReference>
<dbReference type="InterPro" id="IPR022313">
    <property type="entry name" value="Phe/His_NH3-lyase_AS"/>
</dbReference>
<dbReference type="NCBIfam" id="TIGR01225">
    <property type="entry name" value="hutH"/>
    <property type="match status" value="1"/>
</dbReference>
<dbReference type="NCBIfam" id="NF006871">
    <property type="entry name" value="PRK09367.1"/>
    <property type="match status" value="1"/>
</dbReference>
<dbReference type="PANTHER" id="PTHR10362">
    <property type="entry name" value="HISTIDINE AMMONIA-LYASE"/>
    <property type="match status" value="1"/>
</dbReference>
<dbReference type="Pfam" id="PF00221">
    <property type="entry name" value="Lyase_aromatic"/>
    <property type="match status" value="1"/>
</dbReference>
<dbReference type="SUPFAM" id="SSF48557">
    <property type="entry name" value="L-aspartase-like"/>
    <property type="match status" value="1"/>
</dbReference>
<dbReference type="PROSITE" id="PS00488">
    <property type="entry name" value="PAL_HISTIDASE"/>
    <property type="match status" value="1"/>
</dbReference>
<name>HUTH_ALKOO</name>